<name>LOLD_NEIMA</name>
<keyword id="KW-0067">ATP-binding</keyword>
<keyword id="KW-0997">Cell inner membrane</keyword>
<keyword id="KW-1003">Cell membrane</keyword>
<keyword id="KW-0472">Membrane</keyword>
<keyword id="KW-0547">Nucleotide-binding</keyword>
<keyword id="KW-1278">Translocase</keyword>
<keyword id="KW-0813">Transport</keyword>
<protein>
    <recommendedName>
        <fullName evidence="1">Lipoprotein-releasing system ATP-binding protein LolD</fullName>
        <ecNumber evidence="1">7.6.2.-</ecNumber>
    </recommendedName>
</protein>
<accession>P57030</accession>
<accession>A1IS19</accession>
<organism>
    <name type="scientific">Neisseria meningitidis serogroup A / serotype 4A (strain DSM 15465 / Z2491)</name>
    <dbReference type="NCBI Taxonomy" id="122587"/>
    <lineage>
        <taxon>Bacteria</taxon>
        <taxon>Pseudomonadati</taxon>
        <taxon>Pseudomonadota</taxon>
        <taxon>Betaproteobacteria</taxon>
        <taxon>Neisseriales</taxon>
        <taxon>Neisseriaceae</taxon>
        <taxon>Neisseria</taxon>
    </lineage>
</organism>
<evidence type="ECO:0000255" key="1">
    <source>
        <dbReference type="HAMAP-Rule" id="MF_01708"/>
    </source>
</evidence>
<feature type="chain" id="PRO_0000092442" description="Lipoprotein-releasing system ATP-binding protein LolD">
    <location>
        <begin position="1"/>
        <end position="231"/>
    </location>
</feature>
<feature type="domain" description="ABC transporter" evidence="1">
    <location>
        <begin position="6"/>
        <end position="231"/>
    </location>
</feature>
<feature type="binding site" evidence="1">
    <location>
        <begin position="42"/>
        <end position="49"/>
    </location>
    <ligand>
        <name>ATP</name>
        <dbReference type="ChEBI" id="CHEBI:30616"/>
    </ligand>
</feature>
<dbReference type="EC" id="7.6.2.-" evidence="1"/>
<dbReference type="EMBL" id="AL157959">
    <property type="protein sequence ID" value="CAM08569.1"/>
    <property type="molecule type" value="Genomic_DNA"/>
</dbReference>
<dbReference type="PIR" id="C81909">
    <property type="entry name" value="C81909"/>
</dbReference>
<dbReference type="RefSeq" id="WP_002246210.1">
    <property type="nucleotide sequence ID" value="NC_003116.1"/>
</dbReference>
<dbReference type="SMR" id="P57030"/>
<dbReference type="EnsemblBacteria" id="CAM08569">
    <property type="protein sequence ID" value="CAM08569"/>
    <property type="gene ID" value="NMA1402"/>
</dbReference>
<dbReference type="KEGG" id="nma:NMA1402"/>
<dbReference type="HOGENOM" id="CLU_000604_1_22_4"/>
<dbReference type="Proteomes" id="UP000000626">
    <property type="component" value="Chromosome"/>
</dbReference>
<dbReference type="GO" id="GO:0005886">
    <property type="term" value="C:plasma membrane"/>
    <property type="evidence" value="ECO:0007669"/>
    <property type="project" value="UniProtKB-SubCell"/>
</dbReference>
<dbReference type="GO" id="GO:0005524">
    <property type="term" value="F:ATP binding"/>
    <property type="evidence" value="ECO:0007669"/>
    <property type="project" value="UniProtKB-KW"/>
</dbReference>
<dbReference type="GO" id="GO:0016887">
    <property type="term" value="F:ATP hydrolysis activity"/>
    <property type="evidence" value="ECO:0007669"/>
    <property type="project" value="InterPro"/>
</dbReference>
<dbReference type="GO" id="GO:0022857">
    <property type="term" value="F:transmembrane transporter activity"/>
    <property type="evidence" value="ECO:0007669"/>
    <property type="project" value="TreeGrafter"/>
</dbReference>
<dbReference type="GO" id="GO:0044874">
    <property type="term" value="P:lipoprotein localization to outer membrane"/>
    <property type="evidence" value="ECO:0007669"/>
    <property type="project" value="TreeGrafter"/>
</dbReference>
<dbReference type="GO" id="GO:0089705">
    <property type="term" value="P:protein localization to outer membrane"/>
    <property type="evidence" value="ECO:0007669"/>
    <property type="project" value="TreeGrafter"/>
</dbReference>
<dbReference type="CDD" id="cd03255">
    <property type="entry name" value="ABC_MJ0796_LolCDE_FtsE"/>
    <property type="match status" value="1"/>
</dbReference>
<dbReference type="FunFam" id="3.40.50.300:FF:000230">
    <property type="entry name" value="Lipoprotein-releasing system ATP-binding protein LolD"/>
    <property type="match status" value="1"/>
</dbReference>
<dbReference type="Gene3D" id="3.40.50.300">
    <property type="entry name" value="P-loop containing nucleotide triphosphate hydrolases"/>
    <property type="match status" value="1"/>
</dbReference>
<dbReference type="InterPro" id="IPR003593">
    <property type="entry name" value="AAA+_ATPase"/>
</dbReference>
<dbReference type="InterPro" id="IPR003439">
    <property type="entry name" value="ABC_transporter-like_ATP-bd"/>
</dbReference>
<dbReference type="InterPro" id="IPR017871">
    <property type="entry name" value="ABC_transporter-like_CS"/>
</dbReference>
<dbReference type="InterPro" id="IPR015854">
    <property type="entry name" value="ABC_transpr_LolD-like"/>
</dbReference>
<dbReference type="InterPro" id="IPR011924">
    <property type="entry name" value="LolD_lipo_ATP-bd"/>
</dbReference>
<dbReference type="InterPro" id="IPR017911">
    <property type="entry name" value="MacB-like_ATP-bd"/>
</dbReference>
<dbReference type="InterPro" id="IPR027417">
    <property type="entry name" value="P-loop_NTPase"/>
</dbReference>
<dbReference type="NCBIfam" id="TIGR02211">
    <property type="entry name" value="LolD_lipo_ex"/>
    <property type="match status" value="1"/>
</dbReference>
<dbReference type="PANTHER" id="PTHR24220">
    <property type="entry name" value="IMPORT ATP-BINDING PROTEIN"/>
    <property type="match status" value="1"/>
</dbReference>
<dbReference type="PANTHER" id="PTHR24220:SF689">
    <property type="entry name" value="LIPOPROTEIN-RELEASING SYSTEM ATP-BINDING PROTEIN LOLD"/>
    <property type="match status" value="1"/>
</dbReference>
<dbReference type="Pfam" id="PF00005">
    <property type="entry name" value="ABC_tran"/>
    <property type="match status" value="1"/>
</dbReference>
<dbReference type="SMART" id="SM00382">
    <property type="entry name" value="AAA"/>
    <property type="match status" value="1"/>
</dbReference>
<dbReference type="SUPFAM" id="SSF52540">
    <property type="entry name" value="P-loop containing nucleoside triphosphate hydrolases"/>
    <property type="match status" value="1"/>
</dbReference>
<dbReference type="PROSITE" id="PS00211">
    <property type="entry name" value="ABC_TRANSPORTER_1"/>
    <property type="match status" value="1"/>
</dbReference>
<dbReference type="PROSITE" id="PS50893">
    <property type="entry name" value="ABC_TRANSPORTER_2"/>
    <property type="match status" value="1"/>
</dbReference>
<dbReference type="PROSITE" id="PS51244">
    <property type="entry name" value="LOLD"/>
    <property type="match status" value="1"/>
</dbReference>
<gene>
    <name evidence="1" type="primary">lolD</name>
    <name type="ordered locus">NMA1402</name>
</gene>
<sequence>MSELILKCEGVGKRYRDGGLDVLVLHGLDLEIRAGESTGIIGSSGSGKSTLLHILGGLDMPSEGRVLLMGEDLRTLNQRRLGDLRNRHLGFVYQFHHLLPEFSALENVMMPLLIGKKSREEAAEAAMAMLEKVGLKHRSTHRAGELSGGERQRAAIARALVTQPKCLLADEPTGNLDRANARNVLDMMLELKTELGTGLVVVTHDDELAGRFERVMVMKDGSLHPKQGANA</sequence>
<proteinExistence type="inferred from homology"/>
<comment type="function">
    <text evidence="1">Part of the ABC transporter complex LolCDE involved in the translocation of mature outer membrane-directed lipoproteins, from the inner membrane to the periplasmic chaperone, LolA. Responsible for the formation of the LolA-lipoprotein complex in an ATP-dependent manner.</text>
</comment>
<comment type="subunit">
    <text evidence="1">The complex is composed of two ATP-binding proteins (LolD) and two transmembrane proteins (LolC and LolE).</text>
</comment>
<comment type="subcellular location">
    <subcellularLocation>
        <location evidence="1">Cell inner membrane</location>
        <topology evidence="1">Peripheral membrane protein</topology>
    </subcellularLocation>
</comment>
<comment type="similarity">
    <text evidence="1">Belongs to the ABC transporter superfamily. Lipoprotein translocase (TC 3.A.1.125) family.</text>
</comment>
<reference key="1">
    <citation type="journal article" date="2000" name="Nature">
        <title>Complete DNA sequence of a serogroup A strain of Neisseria meningitidis Z2491.</title>
        <authorList>
            <person name="Parkhill J."/>
            <person name="Achtman M."/>
            <person name="James K.D."/>
            <person name="Bentley S.D."/>
            <person name="Churcher C.M."/>
            <person name="Klee S.R."/>
            <person name="Morelli G."/>
            <person name="Basham D."/>
            <person name="Brown D."/>
            <person name="Chillingworth T."/>
            <person name="Davies R.M."/>
            <person name="Davis P."/>
            <person name="Devlin K."/>
            <person name="Feltwell T."/>
            <person name="Hamlin N."/>
            <person name="Holroyd S."/>
            <person name="Jagels K."/>
            <person name="Leather S."/>
            <person name="Moule S."/>
            <person name="Mungall K.L."/>
            <person name="Quail M.A."/>
            <person name="Rajandream M.A."/>
            <person name="Rutherford K.M."/>
            <person name="Simmonds M."/>
            <person name="Skelton J."/>
            <person name="Whitehead S."/>
            <person name="Spratt B.G."/>
            <person name="Barrell B.G."/>
        </authorList>
    </citation>
    <scope>NUCLEOTIDE SEQUENCE [LARGE SCALE GENOMIC DNA]</scope>
    <source>
        <strain>DSM 15465 / Z2491</strain>
    </source>
</reference>